<sequence>MASNSGNDSKNTLYCSFCGKSQHEVRKLIAGPTVFICDECVELCMDIIREETKSAGLKSDDGVPTPQEICGVLDDYVIGQAHAKRVLSVAVHNHYKRLNHSDKSDIELAKSNIMLIGPTGCGKTLLAQTLARILDVPFTMADATTLTEAGYVGEDVENIILKLLQASEYNVERAQRGIVYIDEVDKITRKSDNPSITRDVSGEGVQQALLKIMEGTVASVPPQGGRKHPQQEFLQVDTTNILFICGGAFAGLDKIIAQRGKGSAMGFGADVRDPDSKSVGEYFKDLEPEDLLKFGLIPEFVGRLPVIATLEDLDEDALVTILTGPKNALVKQYQRLFELEDVKLTFTDDAMSAIAKRAILRKTGARGLRSIMEDILLDTMFDMPGAEGVEEVVVNEEAVNSDTQPLMIYAERKADEPASAS</sequence>
<organism>
    <name type="scientific">Jannaschia sp. (strain CCS1)</name>
    <dbReference type="NCBI Taxonomy" id="290400"/>
    <lineage>
        <taxon>Bacteria</taxon>
        <taxon>Pseudomonadati</taxon>
        <taxon>Pseudomonadota</taxon>
        <taxon>Alphaproteobacteria</taxon>
        <taxon>Rhodobacterales</taxon>
        <taxon>Roseobacteraceae</taxon>
        <taxon>Jannaschia</taxon>
    </lineage>
</organism>
<feature type="chain" id="PRO_1000024568" description="ATP-dependent Clp protease ATP-binding subunit ClpX">
    <location>
        <begin position="1"/>
        <end position="421"/>
    </location>
</feature>
<feature type="domain" description="ClpX-type ZB" evidence="2">
    <location>
        <begin position="3"/>
        <end position="56"/>
    </location>
</feature>
<feature type="binding site" evidence="2">
    <location>
        <position position="15"/>
    </location>
    <ligand>
        <name>Zn(2+)</name>
        <dbReference type="ChEBI" id="CHEBI:29105"/>
    </ligand>
</feature>
<feature type="binding site" evidence="2">
    <location>
        <position position="18"/>
    </location>
    <ligand>
        <name>Zn(2+)</name>
        <dbReference type="ChEBI" id="CHEBI:29105"/>
    </ligand>
</feature>
<feature type="binding site" evidence="2">
    <location>
        <position position="37"/>
    </location>
    <ligand>
        <name>Zn(2+)</name>
        <dbReference type="ChEBI" id="CHEBI:29105"/>
    </ligand>
</feature>
<feature type="binding site" evidence="2">
    <location>
        <position position="40"/>
    </location>
    <ligand>
        <name>Zn(2+)</name>
        <dbReference type="ChEBI" id="CHEBI:29105"/>
    </ligand>
</feature>
<feature type="binding site" evidence="1">
    <location>
        <begin position="118"/>
        <end position="125"/>
    </location>
    <ligand>
        <name>ATP</name>
        <dbReference type="ChEBI" id="CHEBI:30616"/>
    </ligand>
</feature>
<protein>
    <recommendedName>
        <fullName evidence="1">ATP-dependent Clp protease ATP-binding subunit ClpX</fullName>
    </recommendedName>
</protein>
<dbReference type="EMBL" id="CP000264">
    <property type="protein sequence ID" value="ABD55724.1"/>
    <property type="molecule type" value="Genomic_DNA"/>
</dbReference>
<dbReference type="RefSeq" id="WP_011455928.1">
    <property type="nucleotide sequence ID" value="NC_007802.1"/>
</dbReference>
<dbReference type="SMR" id="Q28NI8"/>
<dbReference type="STRING" id="290400.Jann_2807"/>
<dbReference type="KEGG" id="jan:Jann_2807"/>
<dbReference type="eggNOG" id="COG1219">
    <property type="taxonomic scope" value="Bacteria"/>
</dbReference>
<dbReference type="HOGENOM" id="CLU_014218_8_2_5"/>
<dbReference type="OrthoDB" id="9804062at2"/>
<dbReference type="Proteomes" id="UP000008326">
    <property type="component" value="Chromosome"/>
</dbReference>
<dbReference type="GO" id="GO:0009376">
    <property type="term" value="C:HslUV protease complex"/>
    <property type="evidence" value="ECO:0007669"/>
    <property type="project" value="TreeGrafter"/>
</dbReference>
<dbReference type="GO" id="GO:0005524">
    <property type="term" value="F:ATP binding"/>
    <property type="evidence" value="ECO:0007669"/>
    <property type="project" value="UniProtKB-UniRule"/>
</dbReference>
<dbReference type="GO" id="GO:0016887">
    <property type="term" value="F:ATP hydrolysis activity"/>
    <property type="evidence" value="ECO:0007669"/>
    <property type="project" value="InterPro"/>
</dbReference>
<dbReference type="GO" id="GO:0140662">
    <property type="term" value="F:ATP-dependent protein folding chaperone"/>
    <property type="evidence" value="ECO:0007669"/>
    <property type="project" value="InterPro"/>
</dbReference>
<dbReference type="GO" id="GO:0046983">
    <property type="term" value="F:protein dimerization activity"/>
    <property type="evidence" value="ECO:0007669"/>
    <property type="project" value="InterPro"/>
</dbReference>
<dbReference type="GO" id="GO:0051082">
    <property type="term" value="F:unfolded protein binding"/>
    <property type="evidence" value="ECO:0007669"/>
    <property type="project" value="UniProtKB-UniRule"/>
</dbReference>
<dbReference type="GO" id="GO:0008270">
    <property type="term" value="F:zinc ion binding"/>
    <property type="evidence" value="ECO:0007669"/>
    <property type="project" value="InterPro"/>
</dbReference>
<dbReference type="GO" id="GO:0051301">
    <property type="term" value="P:cell division"/>
    <property type="evidence" value="ECO:0007669"/>
    <property type="project" value="TreeGrafter"/>
</dbReference>
<dbReference type="GO" id="GO:0051603">
    <property type="term" value="P:proteolysis involved in protein catabolic process"/>
    <property type="evidence" value="ECO:0007669"/>
    <property type="project" value="TreeGrafter"/>
</dbReference>
<dbReference type="CDD" id="cd19497">
    <property type="entry name" value="RecA-like_ClpX"/>
    <property type="match status" value="1"/>
</dbReference>
<dbReference type="FunFam" id="1.10.8.60:FF:000002">
    <property type="entry name" value="ATP-dependent Clp protease ATP-binding subunit ClpX"/>
    <property type="match status" value="1"/>
</dbReference>
<dbReference type="FunFam" id="3.40.50.300:FF:000005">
    <property type="entry name" value="ATP-dependent Clp protease ATP-binding subunit ClpX"/>
    <property type="match status" value="1"/>
</dbReference>
<dbReference type="Gene3D" id="1.10.8.60">
    <property type="match status" value="1"/>
</dbReference>
<dbReference type="Gene3D" id="6.20.220.10">
    <property type="entry name" value="ClpX chaperone, C4-type zinc finger domain"/>
    <property type="match status" value="1"/>
</dbReference>
<dbReference type="Gene3D" id="3.40.50.300">
    <property type="entry name" value="P-loop containing nucleotide triphosphate hydrolases"/>
    <property type="match status" value="1"/>
</dbReference>
<dbReference type="HAMAP" id="MF_00175">
    <property type="entry name" value="ClpX"/>
    <property type="match status" value="1"/>
</dbReference>
<dbReference type="InterPro" id="IPR003593">
    <property type="entry name" value="AAA+_ATPase"/>
</dbReference>
<dbReference type="InterPro" id="IPR050052">
    <property type="entry name" value="ATP-dep_Clp_protease_ClpX"/>
</dbReference>
<dbReference type="InterPro" id="IPR003959">
    <property type="entry name" value="ATPase_AAA_core"/>
</dbReference>
<dbReference type="InterPro" id="IPR019489">
    <property type="entry name" value="Clp_ATPase_C"/>
</dbReference>
<dbReference type="InterPro" id="IPR004487">
    <property type="entry name" value="Clp_protease_ATP-bd_su_ClpX"/>
</dbReference>
<dbReference type="InterPro" id="IPR046425">
    <property type="entry name" value="ClpX_bact"/>
</dbReference>
<dbReference type="InterPro" id="IPR027417">
    <property type="entry name" value="P-loop_NTPase"/>
</dbReference>
<dbReference type="InterPro" id="IPR010603">
    <property type="entry name" value="Znf_CppX_C4"/>
</dbReference>
<dbReference type="InterPro" id="IPR038366">
    <property type="entry name" value="Znf_CppX_C4_sf"/>
</dbReference>
<dbReference type="NCBIfam" id="TIGR00382">
    <property type="entry name" value="clpX"/>
    <property type="match status" value="1"/>
</dbReference>
<dbReference type="NCBIfam" id="NF003745">
    <property type="entry name" value="PRK05342.1"/>
    <property type="match status" value="1"/>
</dbReference>
<dbReference type="PANTHER" id="PTHR48102:SF7">
    <property type="entry name" value="ATP-DEPENDENT CLP PROTEASE ATP-BINDING SUBUNIT CLPX-LIKE, MITOCHONDRIAL"/>
    <property type="match status" value="1"/>
</dbReference>
<dbReference type="PANTHER" id="PTHR48102">
    <property type="entry name" value="ATP-DEPENDENT CLP PROTEASE ATP-BINDING SUBUNIT CLPX-LIKE, MITOCHONDRIAL-RELATED"/>
    <property type="match status" value="1"/>
</dbReference>
<dbReference type="Pfam" id="PF07724">
    <property type="entry name" value="AAA_2"/>
    <property type="match status" value="1"/>
</dbReference>
<dbReference type="Pfam" id="PF10431">
    <property type="entry name" value="ClpB_D2-small"/>
    <property type="match status" value="1"/>
</dbReference>
<dbReference type="Pfam" id="PF06689">
    <property type="entry name" value="zf-C4_ClpX"/>
    <property type="match status" value="1"/>
</dbReference>
<dbReference type="SMART" id="SM00382">
    <property type="entry name" value="AAA"/>
    <property type="match status" value="1"/>
</dbReference>
<dbReference type="SMART" id="SM01086">
    <property type="entry name" value="ClpB_D2-small"/>
    <property type="match status" value="1"/>
</dbReference>
<dbReference type="SMART" id="SM00994">
    <property type="entry name" value="zf-C4_ClpX"/>
    <property type="match status" value="1"/>
</dbReference>
<dbReference type="SUPFAM" id="SSF57716">
    <property type="entry name" value="Glucocorticoid receptor-like (DNA-binding domain)"/>
    <property type="match status" value="1"/>
</dbReference>
<dbReference type="SUPFAM" id="SSF52540">
    <property type="entry name" value="P-loop containing nucleoside triphosphate hydrolases"/>
    <property type="match status" value="1"/>
</dbReference>
<dbReference type="PROSITE" id="PS51902">
    <property type="entry name" value="CLPX_ZB"/>
    <property type="match status" value="1"/>
</dbReference>
<name>CLPX_JANSC</name>
<proteinExistence type="inferred from homology"/>
<gene>
    <name evidence="1" type="primary">clpX</name>
    <name type="ordered locus">Jann_2807</name>
</gene>
<comment type="function">
    <text evidence="1">ATP-dependent specificity component of the Clp protease. It directs the protease to specific substrates. Can perform chaperone functions in the absence of ClpP.</text>
</comment>
<comment type="subunit">
    <text evidence="1">Component of the ClpX-ClpP complex. Forms a hexameric ring that, in the presence of ATP, binds to fourteen ClpP subunits assembled into a disk-like structure with a central cavity, resembling the structure of eukaryotic proteasomes.</text>
</comment>
<comment type="similarity">
    <text evidence="1">Belongs to the ClpX chaperone family.</text>
</comment>
<evidence type="ECO:0000255" key="1">
    <source>
        <dbReference type="HAMAP-Rule" id="MF_00175"/>
    </source>
</evidence>
<evidence type="ECO:0000255" key="2">
    <source>
        <dbReference type="PROSITE-ProRule" id="PRU01250"/>
    </source>
</evidence>
<accession>Q28NI8</accession>
<reference key="1">
    <citation type="submission" date="2006-02" db="EMBL/GenBank/DDBJ databases">
        <title>Complete sequence of chromosome of Jannaschia sp. CCS1.</title>
        <authorList>
            <consortium name="US DOE Joint Genome Institute"/>
            <person name="Copeland A."/>
            <person name="Lucas S."/>
            <person name="Lapidus A."/>
            <person name="Barry K."/>
            <person name="Detter J.C."/>
            <person name="Glavina del Rio T."/>
            <person name="Hammon N."/>
            <person name="Israni S."/>
            <person name="Pitluck S."/>
            <person name="Brettin T."/>
            <person name="Bruce D."/>
            <person name="Han C."/>
            <person name="Tapia R."/>
            <person name="Gilna P."/>
            <person name="Chertkov O."/>
            <person name="Saunders E."/>
            <person name="Schmutz J."/>
            <person name="Larimer F."/>
            <person name="Land M."/>
            <person name="Kyrpides N."/>
            <person name="Lykidis A."/>
            <person name="Moran M.A."/>
            <person name="Belas R."/>
            <person name="Ye W."/>
            <person name="Buchan A."/>
            <person name="Gonzalez J.M."/>
            <person name="Schell M.A."/>
            <person name="Richardson P."/>
        </authorList>
    </citation>
    <scope>NUCLEOTIDE SEQUENCE [LARGE SCALE GENOMIC DNA]</scope>
    <source>
        <strain>CCS1</strain>
    </source>
</reference>
<keyword id="KW-0067">ATP-binding</keyword>
<keyword id="KW-0143">Chaperone</keyword>
<keyword id="KW-0479">Metal-binding</keyword>
<keyword id="KW-0547">Nucleotide-binding</keyword>
<keyword id="KW-1185">Reference proteome</keyword>
<keyword id="KW-0862">Zinc</keyword>